<feature type="chain" id="PRO_0000458996" description="Indoleacetate decarboxylase activating enzyme">
    <location>
        <begin position="1"/>
        <end position="315"/>
    </location>
</feature>
<feature type="domain" description="Radical SAM core" evidence="3">
    <location>
        <begin position="21"/>
        <end position="311"/>
    </location>
</feature>
<feature type="domain" description="4Fe-4S ferredoxin-type 1" evidence="2">
    <location>
        <begin position="52"/>
        <end position="81"/>
    </location>
</feature>
<feature type="domain" description="4Fe-4S ferredoxin-type 2" evidence="2">
    <location>
        <begin position="89"/>
        <end position="120"/>
    </location>
</feature>
<feature type="binding site" evidence="3">
    <location>
        <position position="35"/>
    </location>
    <ligand>
        <name>[4Fe-4S] cluster</name>
        <dbReference type="ChEBI" id="CHEBI:49883"/>
        <label>1</label>
        <note>4Fe-4S-S-AdoMet</note>
    </ligand>
</feature>
<feature type="binding site" evidence="3">
    <location>
        <position position="39"/>
    </location>
    <ligand>
        <name>[4Fe-4S] cluster</name>
        <dbReference type="ChEBI" id="CHEBI:49883"/>
        <label>1</label>
        <note>4Fe-4S-S-AdoMet</note>
    </ligand>
</feature>
<feature type="binding site" evidence="3">
    <location>
        <position position="42"/>
    </location>
    <ligand>
        <name>[4Fe-4S] cluster</name>
        <dbReference type="ChEBI" id="CHEBI:49883"/>
        <label>1</label>
        <note>4Fe-4S-S-AdoMet</note>
    </ligand>
</feature>
<feature type="binding site" evidence="2">
    <location>
        <position position="61"/>
    </location>
    <ligand>
        <name>[4Fe-4S] cluster</name>
        <dbReference type="ChEBI" id="CHEBI:49883"/>
        <label>2</label>
    </ligand>
</feature>
<feature type="binding site" evidence="2">
    <location>
        <position position="64"/>
    </location>
    <ligand>
        <name>[4Fe-4S] cluster</name>
        <dbReference type="ChEBI" id="CHEBI:49883"/>
        <label>2</label>
    </ligand>
</feature>
<feature type="binding site" evidence="2">
    <location>
        <position position="67"/>
    </location>
    <ligand>
        <name>[4Fe-4S] cluster</name>
        <dbReference type="ChEBI" id="CHEBI:49883"/>
        <label>2</label>
    </ligand>
</feature>
<feature type="binding site" evidence="2">
    <location>
        <position position="71"/>
    </location>
    <ligand>
        <name>[4Fe-4S] cluster</name>
        <dbReference type="ChEBI" id="CHEBI:49883"/>
        <label>3</label>
    </ligand>
</feature>
<feature type="binding site" evidence="2">
    <location>
        <position position="98"/>
    </location>
    <ligand>
        <name>[4Fe-4S] cluster</name>
        <dbReference type="ChEBI" id="CHEBI:49883"/>
        <label>3</label>
    </ligand>
</feature>
<feature type="binding site" evidence="2">
    <location>
        <position position="101"/>
    </location>
    <ligand>
        <name>[4Fe-4S] cluster</name>
        <dbReference type="ChEBI" id="CHEBI:49883"/>
        <label>3</label>
    </ligand>
</feature>
<feature type="binding site" evidence="2">
    <location>
        <position position="106"/>
    </location>
    <ligand>
        <name>[4Fe-4S] cluster</name>
        <dbReference type="ChEBI" id="CHEBI:49883"/>
        <label>3</label>
    </ligand>
</feature>
<feature type="binding site" evidence="2">
    <location>
        <position position="110"/>
    </location>
    <ligand>
        <name>[4Fe-4S] cluster</name>
        <dbReference type="ChEBI" id="CHEBI:49883"/>
        <label>2</label>
    </ligand>
</feature>
<feature type="binding site" evidence="1">
    <location>
        <position position="149"/>
    </location>
    <ligand>
        <name>S-adenosyl-L-methionine</name>
        <dbReference type="ChEBI" id="CHEBI:59789"/>
    </ligand>
</feature>
<feature type="binding site" evidence="1">
    <location>
        <begin position="198"/>
        <end position="200"/>
    </location>
    <ligand>
        <name>S-adenosyl-L-methionine</name>
        <dbReference type="ChEBI" id="CHEBI:59789"/>
    </ligand>
</feature>
<feature type="binding site" evidence="1">
    <location>
        <position position="271"/>
    </location>
    <ligand>
        <name>S-adenosyl-L-methionine</name>
        <dbReference type="ChEBI" id="CHEBI:59789"/>
    </ligand>
</feature>
<keyword id="KW-0004">4Fe-4S</keyword>
<keyword id="KW-0408">Iron</keyword>
<keyword id="KW-0411">Iron-sulfur</keyword>
<keyword id="KW-0479">Metal-binding</keyword>
<keyword id="KW-0560">Oxidoreductase</keyword>
<keyword id="KW-1185">Reference proteome</keyword>
<keyword id="KW-0949">S-adenosyl-L-methionine</keyword>
<sequence length="315" mass="35297">MKNEDGKLKAMIFDIQSFSTHDGPGIRTNVFFKGCTLRCPWCANPESQKGNPQLLYTKMKCIGCMCCARACPYGAVSAITDPDEIKRVGYVHHDRSKCDKCTTHECLSACFQEALSIAGELMTVDDVMKKIDRDAVVYRNKGGVTVSGGDPLLHPDFLEELLCRCHEKAYNVALESELCVPTKNLERVMPYIDYYYTDCKIIDPVEHKRITGVSNDIILKNLRLIGERCPERMVLRTPIIPGFTDSDENIDGIASFAAECHFPTMNILPYHKLGVTKHERLGSTYQLPNVQPPSDAQMHHLADIIEAHGVKCIIN</sequence>
<reference key="1">
    <citation type="journal article" date="2016" name="Genome Announc.">
        <title>Draft genome sequence of Olsenella scatoligenes SK9K4, a producer of 3-methylindole (skatole) and 4-methylphenol (p-cresol), isolated from pig feces.</title>
        <authorList>
            <person name="Li X."/>
            <person name="Hojberg O."/>
            <person name="Noel S.J."/>
            <person name="Canibe N."/>
            <person name="Jensen B.B."/>
        </authorList>
    </citation>
    <scope>NUCLEOTIDE SEQUENCE [LARGE SCALE GENOMIC DNA]</scope>
    <source>
        <strain>DSM 28304 / JCM 19907 / KCTC 15503 / SK9K4</strain>
    </source>
</reference>
<reference key="2">
    <citation type="journal article" date="2018" name="Nat. Commun.">
        <title>Indoleacetate decarboxylase is a glycyl radical enzyme catalysing the formation of malodorant skatole.</title>
        <authorList>
            <person name="Liu D."/>
            <person name="Wei Y."/>
            <person name="Liu X."/>
            <person name="Zhou Y."/>
            <person name="Jiang L."/>
            <person name="Yin J."/>
            <person name="Wang F."/>
            <person name="Hu Y."/>
            <person name="Nanjaraj Urs A.N."/>
            <person name="Liu Y."/>
            <person name="Ang E.L."/>
            <person name="Zhao S."/>
            <person name="Zhao H."/>
            <person name="Zhang Y."/>
        </authorList>
    </citation>
    <scope>FUNCTION</scope>
    <scope>COFACTOR</scope>
</reference>
<protein>
    <recommendedName>
        <fullName evidence="6">Indoleacetate decarboxylase activating enzyme</fullName>
        <ecNumber evidence="7">1.97.1.-</ecNumber>
    </recommendedName>
    <alternativeName>
        <fullName evidence="5">OsIADAE</fullName>
    </alternativeName>
</protein>
<gene>
    <name evidence="8" type="ORF">AUL39_03430</name>
</gene>
<comment type="function">
    <text evidence="4">Catalyzes activation of the indoleacetate decarboxylase OsIAD under anaerobic conditions by generation of an organic free radical on a glycine residue, via a homolytic cleavage of S-adenosyl-L-methionine (SAM).</text>
</comment>
<comment type="catalytic activity">
    <reaction evidence="7">
        <text>glycyl-[protein] + reduced [flavodoxin] + S-adenosyl-L-methionine = glycin-2-yl radical-[protein] + semiquinone [flavodoxin] + 5'-deoxyadenosine + L-methionine + H(+)</text>
        <dbReference type="Rhea" id="RHEA:61976"/>
        <dbReference type="Rhea" id="RHEA-COMP:10622"/>
        <dbReference type="Rhea" id="RHEA-COMP:14480"/>
        <dbReference type="Rhea" id="RHEA-COMP:15993"/>
        <dbReference type="Rhea" id="RHEA-COMP:15994"/>
        <dbReference type="ChEBI" id="CHEBI:15378"/>
        <dbReference type="ChEBI" id="CHEBI:17319"/>
        <dbReference type="ChEBI" id="CHEBI:29947"/>
        <dbReference type="ChEBI" id="CHEBI:32722"/>
        <dbReference type="ChEBI" id="CHEBI:57618"/>
        <dbReference type="ChEBI" id="CHEBI:57844"/>
        <dbReference type="ChEBI" id="CHEBI:59789"/>
        <dbReference type="ChEBI" id="CHEBI:140311"/>
    </reaction>
</comment>
<comment type="cofactor">
    <cofactor evidence="4">
        <name>[4Fe-4S] cluster</name>
        <dbReference type="ChEBI" id="CHEBI:49883"/>
    </cofactor>
    <text evidence="1 2 3">Binds 3 [4Fe-4S] clusters (By similarity). One cluster is coordinated with 3 cysteines and an exchangeable S-adenosyl-L-methionine (By similarity).</text>
</comment>
<comment type="similarity">
    <text evidence="6">Belongs to the organic radical-activating enzymes family.</text>
</comment>
<name>IADAE_TRASO</name>
<evidence type="ECO:0000250" key="1">
    <source>
        <dbReference type="UniProtKB" id="P0A9N4"/>
    </source>
</evidence>
<evidence type="ECO:0000255" key="2">
    <source>
        <dbReference type="PROSITE-ProRule" id="PRU00711"/>
    </source>
</evidence>
<evidence type="ECO:0000255" key="3">
    <source>
        <dbReference type="PROSITE-ProRule" id="PRU01266"/>
    </source>
</evidence>
<evidence type="ECO:0000269" key="4">
    <source>
    </source>
</evidence>
<evidence type="ECO:0000303" key="5">
    <source>
    </source>
</evidence>
<evidence type="ECO:0000305" key="6"/>
<evidence type="ECO:0000305" key="7">
    <source>
    </source>
</evidence>
<evidence type="ECO:0000312" key="8">
    <source>
        <dbReference type="EMBL" id="KUH59382.1"/>
    </source>
</evidence>
<dbReference type="EC" id="1.97.1.-" evidence="7"/>
<dbReference type="EMBL" id="LOJF01000001">
    <property type="protein sequence ID" value="KUH59382.1"/>
    <property type="molecule type" value="Genomic_DNA"/>
</dbReference>
<dbReference type="RefSeq" id="WP_059053623.1">
    <property type="nucleotide sequence ID" value="NZ_LOJF01000001.1"/>
</dbReference>
<dbReference type="SMR" id="A0A124EH39"/>
<dbReference type="STRING" id="1299998.AUL39_03430"/>
<dbReference type="OrthoDB" id="9782387at2"/>
<dbReference type="Proteomes" id="UP000054078">
    <property type="component" value="Unassembled WGS sequence"/>
</dbReference>
<dbReference type="GO" id="GO:0051539">
    <property type="term" value="F:4 iron, 4 sulfur cluster binding"/>
    <property type="evidence" value="ECO:0007669"/>
    <property type="project" value="UniProtKB-KW"/>
</dbReference>
<dbReference type="GO" id="GO:0046872">
    <property type="term" value="F:metal ion binding"/>
    <property type="evidence" value="ECO:0007669"/>
    <property type="project" value="UniProtKB-KW"/>
</dbReference>
<dbReference type="GO" id="GO:0016491">
    <property type="term" value="F:oxidoreductase activity"/>
    <property type="evidence" value="ECO:0007669"/>
    <property type="project" value="UniProtKB-KW"/>
</dbReference>
<dbReference type="Gene3D" id="3.20.20.70">
    <property type="entry name" value="Aldolase class I"/>
    <property type="match status" value="1"/>
</dbReference>
<dbReference type="InterPro" id="IPR017896">
    <property type="entry name" value="4Fe4S_Fe-S-bd"/>
</dbReference>
<dbReference type="InterPro" id="IPR017900">
    <property type="entry name" value="4Fe4S_Fe_S_CS"/>
</dbReference>
<dbReference type="InterPro" id="IPR013785">
    <property type="entry name" value="Aldolase_TIM"/>
</dbReference>
<dbReference type="InterPro" id="IPR040074">
    <property type="entry name" value="BssD/PflA/YjjW"/>
</dbReference>
<dbReference type="InterPro" id="IPR054981">
    <property type="entry name" value="Ind_deCO2_activ"/>
</dbReference>
<dbReference type="InterPro" id="IPR034457">
    <property type="entry name" value="Organic_radical-activating"/>
</dbReference>
<dbReference type="InterPro" id="IPR012839">
    <property type="entry name" value="Organic_radical_activase"/>
</dbReference>
<dbReference type="InterPro" id="IPR001989">
    <property type="entry name" value="Radical_activat_CS"/>
</dbReference>
<dbReference type="InterPro" id="IPR007197">
    <property type="entry name" value="rSAM"/>
</dbReference>
<dbReference type="NCBIfam" id="NF033719">
    <property type="entry name" value="ind_deCO2_activ"/>
    <property type="match status" value="1"/>
</dbReference>
<dbReference type="NCBIfam" id="TIGR02494">
    <property type="entry name" value="PFLE_PFLC"/>
    <property type="match status" value="1"/>
</dbReference>
<dbReference type="PANTHER" id="PTHR30352:SF4">
    <property type="entry name" value="PYRUVATE FORMATE-LYASE 2-ACTIVATING ENZYME"/>
    <property type="match status" value="1"/>
</dbReference>
<dbReference type="PANTHER" id="PTHR30352">
    <property type="entry name" value="PYRUVATE FORMATE-LYASE-ACTIVATING ENZYME"/>
    <property type="match status" value="1"/>
</dbReference>
<dbReference type="Pfam" id="PF00037">
    <property type="entry name" value="Fer4"/>
    <property type="match status" value="1"/>
</dbReference>
<dbReference type="Pfam" id="PF13353">
    <property type="entry name" value="Fer4_12"/>
    <property type="match status" value="1"/>
</dbReference>
<dbReference type="Pfam" id="PF04055">
    <property type="entry name" value="Radical_SAM"/>
    <property type="match status" value="1"/>
</dbReference>
<dbReference type="PIRSF" id="PIRSF000371">
    <property type="entry name" value="PFL_act_enz"/>
    <property type="match status" value="1"/>
</dbReference>
<dbReference type="SFLD" id="SFLDG01118">
    <property type="entry name" value="activating_enzymes__group_2"/>
    <property type="match status" value="1"/>
</dbReference>
<dbReference type="SFLD" id="SFLDG01066">
    <property type="entry name" value="organic_radical-activating_enz"/>
    <property type="match status" value="1"/>
</dbReference>
<dbReference type="SUPFAM" id="SSF54862">
    <property type="entry name" value="4Fe-4S ferredoxins"/>
    <property type="match status" value="1"/>
</dbReference>
<dbReference type="SUPFAM" id="SSF102114">
    <property type="entry name" value="Radical SAM enzymes"/>
    <property type="match status" value="1"/>
</dbReference>
<dbReference type="PROSITE" id="PS00198">
    <property type="entry name" value="4FE4S_FER_1"/>
    <property type="match status" value="1"/>
</dbReference>
<dbReference type="PROSITE" id="PS51379">
    <property type="entry name" value="4FE4S_FER_2"/>
    <property type="match status" value="2"/>
</dbReference>
<dbReference type="PROSITE" id="PS01087">
    <property type="entry name" value="RADICAL_ACTIVATING"/>
    <property type="match status" value="1"/>
</dbReference>
<dbReference type="PROSITE" id="PS51918">
    <property type="entry name" value="RADICAL_SAM"/>
    <property type="match status" value="1"/>
</dbReference>
<proteinExistence type="inferred from homology"/>
<organism>
    <name type="scientific">Tractidigestivibacter scatoligenes</name>
    <name type="common">Olsenella scatoligenes</name>
    <dbReference type="NCBI Taxonomy" id="1299998"/>
    <lineage>
        <taxon>Bacteria</taxon>
        <taxon>Bacillati</taxon>
        <taxon>Actinomycetota</taxon>
        <taxon>Coriobacteriia</taxon>
        <taxon>Coriobacteriales</taxon>
        <taxon>Atopobiaceae</taxon>
        <taxon>Tractidigestivibacter</taxon>
    </lineage>
</organism>
<accession>A0A124EH39</accession>